<name>OR94A_DROME</name>
<dbReference type="EMBL" id="AE014297">
    <property type="protein sequence ID" value="AAF56076.1"/>
    <property type="molecule type" value="Genomic_DNA"/>
</dbReference>
<dbReference type="RefSeq" id="NP_524455.1">
    <property type="nucleotide sequence ID" value="NM_079731.1"/>
</dbReference>
<dbReference type="SMR" id="Q9VCS9"/>
<dbReference type="FunCoup" id="Q9VCS9">
    <property type="interactions" value="29"/>
</dbReference>
<dbReference type="STRING" id="7227.FBpp0083734"/>
<dbReference type="GlyCosmos" id="Q9VCS9">
    <property type="glycosylation" value="1 site, No reported glycans"/>
</dbReference>
<dbReference type="GlyGen" id="Q9VCS9">
    <property type="glycosylation" value="1 site"/>
</dbReference>
<dbReference type="PaxDb" id="7227-FBpp0083734"/>
<dbReference type="EnsemblMetazoa" id="FBtr0084341">
    <property type="protein sequence ID" value="FBpp0083734"/>
    <property type="gene ID" value="FBgn0039033"/>
</dbReference>
<dbReference type="GeneID" id="42711"/>
<dbReference type="KEGG" id="dme:Dmel_CG17241"/>
<dbReference type="AGR" id="FB:FBgn0039033"/>
<dbReference type="CTD" id="42711"/>
<dbReference type="FlyBase" id="FBgn0039033">
    <property type="gene designation" value="Or94a"/>
</dbReference>
<dbReference type="VEuPathDB" id="VectorBase:FBgn0039033"/>
<dbReference type="eggNOG" id="ENOG502SV87">
    <property type="taxonomic scope" value="Eukaryota"/>
</dbReference>
<dbReference type="GeneTree" id="ENSGT00530000064740"/>
<dbReference type="HOGENOM" id="CLU_033399_6_3_1"/>
<dbReference type="InParanoid" id="Q9VCS9"/>
<dbReference type="OMA" id="MWLEAFV"/>
<dbReference type="OrthoDB" id="7548151at2759"/>
<dbReference type="PhylomeDB" id="Q9VCS9"/>
<dbReference type="BioGRID-ORCS" id="42711">
    <property type="hits" value="0 hits in 1 CRISPR screen"/>
</dbReference>
<dbReference type="GenomeRNAi" id="42711"/>
<dbReference type="PRO" id="PR:Q9VCS9"/>
<dbReference type="Proteomes" id="UP000000803">
    <property type="component" value="Chromosome 3R"/>
</dbReference>
<dbReference type="Bgee" id="FBgn0039033">
    <property type="expression patterns" value="Expressed in adult Malpighian tubule bar-shaped cell of initial segment in Malpighian tubule and 2 other cell types or tissues"/>
</dbReference>
<dbReference type="ExpressionAtlas" id="Q9VCS9">
    <property type="expression patterns" value="baseline and differential"/>
</dbReference>
<dbReference type="GO" id="GO:0034703">
    <property type="term" value="C:cation channel complex"/>
    <property type="evidence" value="ECO:0000250"/>
    <property type="project" value="FlyBase"/>
</dbReference>
<dbReference type="GO" id="GO:0032590">
    <property type="term" value="C:dendrite membrane"/>
    <property type="evidence" value="ECO:0000250"/>
    <property type="project" value="FlyBase"/>
</dbReference>
<dbReference type="GO" id="GO:0005886">
    <property type="term" value="C:plasma membrane"/>
    <property type="evidence" value="ECO:0000250"/>
    <property type="project" value="FlyBase"/>
</dbReference>
<dbReference type="GO" id="GO:0170020">
    <property type="term" value="F:ionotropic olfactory receptor activity"/>
    <property type="evidence" value="ECO:0000250"/>
    <property type="project" value="FlyBase"/>
</dbReference>
<dbReference type="GO" id="GO:0005549">
    <property type="term" value="F:odorant binding"/>
    <property type="evidence" value="ECO:0000250"/>
    <property type="project" value="FlyBase"/>
</dbReference>
<dbReference type="GO" id="GO:0004984">
    <property type="term" value="F:olfactory receptor activity"/>
    <property type="evidence" value="ECO:0000318"/>
    <property type="project" value="GO_Central"/>
</dbReference>
<dbReference type="GO" id="GO:0050911">
    <property type="term" value="P:detection of chemical stimulus involved in sensory perception of smell"/>
    <property type="evidence" value="ECO:0000315"/>
    <property type="project" value="FlyBase"/>
</dbReference>
<dbReference type="GO" id="GO:0007165">
    <property type="term" value="P:signal transduction"/>
    <property type="evidence" value="ECO:0007669"/>
    <property type="project" value="UniProtKB-KW"/>
</dbReference>
<dbReference type="InterPro" id="IPR004117">
    <property type="entry name" value="7tm6_olfct_rcpt"/>
</dbReference>
<dbReference type="PANTHER" id="PTHR21137">
    <property type="entry name" value="ODORANT RECEPTOR"/>
    <property type="match status" value="1"/>
</dbReference>
<dbReference type="PANTHER" id="PTHR21137:SF37">
    <property type="entry name" value="ODORANT RECEPTOR 46A, ISOFORM B-RELATED"/>
    <property type="match status" value="1"/>
</dbReference>
<dbReference type="Pfam" id="PF02949">
    <property type="entry name" value="7tm_6"/>
    <property type="match status" value="1"/>
</dbReference>
<comment type="function">
    <text evidence="3">Odorant receptor which mediates acceptance or avoidance behavior, depending on its substrates. The odorant receptor repertoire encodes a large collection of odor stimuli that vary widely in identity, intensity, and duration. May form a complex with Orco to form odorant-sensing units, providing sensitive and prolonged odorant signaling and calcium permeability.</text>
</comment>
<comment type="subunit">
    <text evidence="1">Interacts with Orco. Complexes exist early in the endomembrane system in olfactory sensory neurons (OSNs), coupling these complexes to the conserved ciliary trafficking pathway (By similarity).</text>
</comment>
<comment type="subcellular location">
    <subcellularLocation>
        <location evidence="1">Cell membrane</location>
        <topology evidence="1">Multi-pass membrane protein</topology>
    </subcellularLocation>
</comment>
<comment type="miscellaneous">
    <text>The atypical heteromeric and topological design of the odorant receptors appears to be an insect-specific solution for odor recognition, making the OR/Orco complex an attractive target for the development of highly selective insect repellents to disrupt olfactory-mediated host-seeking behaviors of insect disease vectors. Odor-evoked OR currents are independent of known G-protein-coupled second messenger pathways.</text>
</comment>
<comment type="similarity">
    <text evidence="4">Belongs to the insect chemoreceptor superfamily. Heteromeric odorant receptor channel (TC 1.A.69) family. Or2a subfamily.</text>
</comment>
<reference key="1">
    <citation type="journal article" date="2000" name="Science">
        <title>The genome sequence of Drosophila melanogaster.</title>
        <authorList>
            <person name="Adams M.D."/>
            <person name="Celniker S.E."/>
            <person name="Holt R.A."/>
            <person name="Evans C.A."/>
            <person name="Gocayne J.D."/>
            <person name="Amanatides P.G."/>
            <person name="Scherer S.E."/>
            <person name="Li P.W."/>
            <person name="Hoskins R.A."/>
            <person name="Galle R.F."/>
            <person name="George R.A."/>
            <person name="Lewis S.E."/>
            <person name="Richards S."/>
            <person name="Ashburner M."/>
            <person name="Henderson S.N."/>
            <person name="Sutton G.G."/>
            <person name="Wortman J.R."/>
            <person name="Yandell M.D."/>
            <person name="Zhang Q."/>
            <person name="Chen L.X."/>
            <person name="Brandon R.C."/>
            <person name="Rogers Y.-H.C."/>
            <person name="Blazej R.G."/>
            <person name="Champe M."/>
            <person name="Pfeiffer B.D."/>
            <person name="Wan K.H."/>
            <person name="Doyle C."/>
            <person name="Baxter E.G."/>
            <person name="Helt G."/>
            <person name="Nelson C.R."/>
            <person name="Miklos G.L.G."/>
            <person name="Abril J.F."/>
            <person name="Agbayani A."/>
            <person name="An H.-J."/>
            <person name="Andrews-Pfannkoch C."/>
            <person name="Baldwin D."/>
            <person name="Ballew R.M."/>
            <person name="Basu A."/>
            <person name="Baxendale J."/>
            <person name="Bayraktaroglu L."/>
            <person name="Beasley E.M."/>
            <person name="Beeson K.Y."/>
            <person name="Benos P.V."/>
            <person name="Berman B.P."/>
            <person name="Bhandari D."/>
            <person name="Bolshakov S."/>
            <person name="Borkova D."/>
            <person name="Botchan M.R."/>
            <person name="Bouck J."/>
            <person name="Brokstein P."/>
            <person name="Brottier P."/>
            <person name="Burtis K.C."/>
            <person name="Busam D.A."/>
            <person name="Butler H."/>
            <person name="Cadieu E."/>
            <person name="Center A."/>
            <person name="Chandra I."/>
            <person name="Cherry J.M."/>
            <person name="Cawley S."/>
            <person name="Dahlke C."/>
            <person name="Davenport L.B."/>
            <person name="Davies P."/>
            <person name="de Pablos B."/>
            <person name="Delcher A."/>
            <person name="Deng Z."/>
            <person name="Mays A.D."/>
            <person name="Dew I."/>
            <person name="Dietz S.M."/>
            <person name="Dodson K."/>
            <person name="Doup L.E."/>
            <person name="Downes M."/>
            <person name="Dugan-Rocha S."/>
            <person name="Dunkov B.C."/>
            <person name="Dunn P."/>
            <person name="Durbin K.J."/>
            <person name="Evangelista C.C."/>
            <person name="Ferraz C."/>
            <person name="Ferriera S."/>
            <person name="Fleischmann W."/>
            <person name="Fosler C."/>
            <person name="Gabrielian A.E."/>
            <person name="Garg N.S."/>
            <person name="Gelbart W.M."/>
            <person name="Glasser K."/>
            <person name="Glodek A."/>
            <person name="Gong F."/>
            <person name="Gorrell J.H."/>
            <person name="Gu Z."/>
            <person name="Guan P."/>
            <person name="Harris M."/>
            <person name="Harris N.L."/>
            <person name="Harvey D.A."/>
            <person name="Heiman T.J."/>
            <person name="Hernandez J.R."/>
            <person name="Houck J."/>
            <person name="Hostin D."/>
            <person name="Houston K.A."/>
            <person name="Howland T.J."/>
            <person name="Wei M.-H."/>
            <person name="Ibegwam C."/>
            <person name="Jalali M."/>
            <person name="Kalush F."/>
            <person name="Karpen G.H."/>
            <person name="Ke Z."/>
            <person name="Kennison J.A."/>
            <person name="Ketchum K.A."/>
            <person name="Kimmel B.E."/>
            <person name="Kodira C.D."/>
            <person name="Kraft C.L."/>
            <person name="Kravitz S."/>
            <person name="Kulp D."/>
            <person name="Lai Z."/>
            <person name="Lasko P."/>
            <person name="Lei Y."/>
            <person name="Levitsky A.A."/>
            <person name="Li J.H."/>
            <person name="Li Z."/>
            <person name="Liang Y."/>
            <person name="Lin X."/>
            <person name="Liu X."/>
            <person name="Mattei B."/>
            <person name="McIntosh T.C."/>
            <person name="McLeod M.P."/>
            <person name="McPherson D."/>
            <person name="Merkulov G."/>
            <person name="Milshina N.V."/>
            <person name="Mobarry C."/>
            <person name="Morris J."/>
            <person name="Moshrefi A."/>
            <person name="Mount S.M."/>
            <person name="Moy M."/>
            <person name="Murphy B."/>
            <person name="Murphy L."/>
            <person name="Muzny D.M."/>
            <person name="Nelson D.L."/>
            <person name="Nelson D.R."/>
            <person name="Nelson K.A."/>
            <person name="Nixon K."/>
            <person name="Nusskern D.R."/>
            <person name="Pacleb J.M."/>
            <person name="Palazzolo M."/>
            <person name="Pittman G.S."/>
            <person name="Pan S."/>
            <person name="Pollard J."/>
            <person name="Puri V."/>
            <person name="Reese M.G."/>
            <person name="Reinert K."/>
            <person name="Remington K."/>
            <person name="Saunders R.D.C."/>
            <person name="Scheeler F."/>
            <person name="Shen H."/>
            <person name="Shue B.C."/>
            <person name="Siden-Kiamos I."/>
            <person name="Simpson M."/>
            <person name="Skupski M.P."/>
            <person name="Smith T.J."/>
            <person name="Spier E."/>
            <person name="Spradling A.C."/>
            <person name="Stapleton M."/>
            <person name="Strong R."/>
            <person name="Sun E."/>
            <person name="Svirskas R."/>
            <person name="Tector C."/>
            <person name="Turner R."/>
            <person name="Venter E."/>
            <person name="Wang A.H."/>
            <person name="Wang X."/>
            <person name="Wang Z.-Y."/>
            <person name="Wassarman D.A."/>
            <person name="Weinstock G.M."/>
            <person name="Weissenbach J."/>
            <person name="Williams S.M."/>
            <person name="Woodage T."/>
            <person name="Worley K.C."/>
            <person name="Wu D."/>
            <person name="Yang S."/>
            <person name="Yao Q.A."/>
            <person name="Ye J."/>
            <person name="Yeh R.-F."/>
            <person name="Zaveri J.S."/>
            <person name="Zhan M."/>
            <person name="Zhang G."/>
            <person name="Zhao Q."/>
            <person name="Zheng L."/>
            <person name="Zheng X.H."/>
            <person name="Zhong F.N."/>
            <person name="Zhong W."/>
            <person name="Zhou X."/>
            <person name="Zhu S.C."/>
            <person name="Zhu X."/>
            <person name="Smith H.O."/>
            <person name="Gibbs R.A."/>
            <person name="Myers E.W."/>
            <person name="Rubin G.M."/>
            <person name="Venter J.C."/>
        </authorList>
    </citation>
    <scope>NUCLEOTIDE SEQUENCE [LARGE SCALE GENOMIC DNA]</scope>
    <source>
        <strain>Berkeley</strain>
    </source>
</reference>
<reference key="2">
    <citation type="journal article" date="2002" name="Genome Biol.">
        <title>Annotation of the Drosophila melanogaster euchromatic genome: a systematic review.</title>
        <authorList>
            <person name="Misra S."/>
            <person name="Crosby M.A."/>
            <person name="Mungall C.J."/>
            <person name="Matthews B.B."/>
            <person name="Campbell K.S."/>
            <person name="Hradecky P."/>
            <person name="Huang Y."/>
            <person name="Kaminker J.S."/>
            <person name="Millburn G.H."/>
            <person name="Prochnik S.E."/>
            <person name="Smith C.D."/>
            <person name="Tupy J.L."/>
            <person name="Whitfield E.J."/>
            <person name="Bayraktaroglu L."/>
            <person name="Berman B.P."/>
            <person name="Bettencourt B.R."/>
            <person name="Celniker S.E."/>
            <person name="de Grey A.D.N.J."/>
            <person name="Drysdale R.A."/>
            <person name="Harris N.L."/>
            <person name="Richter J."/>
            <person name="Russo S."/>
            <person name="Schroeder A.J."/>
            <person name="Shu S.Q."/>
            <person name="Stapleton M."/>
            <person name="Yamada C."/>
            <person name="Ashburner M."/>
            <person name="Gelbart W.M."/>
            <person name="Rubin G.M."/>
            <person name="Lewis S.E."/>
        </authorList>
    </citation>
    <scope>GENOME REANNOTATION</scope>
    <source>
        <strain>Berkeley</strain>
    </source>
</reference>
<reference key="3">
    <citation type="journal article" date="2011" name="J. Neurosci.">
        <title>Similar odorants elicit different behavioral and physiological responses, some supersustained.</title>
        <authorList>
            <person name="Montague S.A."/>
            <person name="Mathew D."/>
            <person name="Carlson J.R."/>
        </authorList>
    </citation>
    <scope>FUNCTION</scope>
</reference>
<sequence length="387" mass="46052">MDKHKDRIESMRLILQVMQLFGLWPWSLKSEEEWTFTGFVKRNYRFLLHLPITFTFIGLMWLEAFISSNLEQAGQVLYMSITEMALVVKILSIWHYRTEAWRLMYELQHAPDYQLHNQEEVDFWRREQRFFKWFFYIYILISLGVVYSGCTGVLFLEGYELPFAYYVPFEWQNERRYWFAYGYDMAGMTLTCISNITLDTLGCYFLFHISLLYRLLGLRLRETKNMKNDTIFGQQLRAIFIMHQRIRSLTLTCQRIVSPYILSQIILSALIICFSGYRLQHVGIRDNPGQFISMLQFVSVMILQIYLPCYYGNEITVYANQLTNEVYHTNWLECRPPIRKLLNAYMEHLKKPVTIRAGNFFAVGLPIFVKTINNAYSFLALLLNVSN</sequence>
<protein>
    <recommendedName>
        <fullName>Odorant receptor 94a</fullName>
    </recommendedName>
</protein>
<keyword id="KW-1003">Cell membrane</keyword>
<keyword id="KW-0325">Glycoprotein</keyword>
<keyword id="KW-0472">Membrane</keyword>
<keyword id="KW-0552">Olfaction</keyword>
<keyword id="KW-0675">Receptor</keyword>
<keyword id="KW-1185">Reference proteome</keyword>
<keyword id="KW-0716">Sensory transduction</keyword>
<keyword id="KW-0807">Transducer</keyword>
<keyword id="KW-0812">Transmembrane</keyword>
<keyword id="KW-1133">Transmembrane helix</keyword>
<accession>Q9VCS9</accession>
<evidence type="ECO:0000250" key="1"/>
<evidence type="ECO:0000255" key="2"/>
<evidence type="ECO:0000269" key="3">
    <source>
    </source>
</evidence>
<evidence type="ECO:0000305" key="4"/>
<organism>
    <name type="scientific">Drosophila melanogaster</name>
    <name type="common">Fruit fly</name>
    <dbReference type="NCBI Taxonomy" id="7227"/>
    <lineage>
        <taxon>Eukaryota</taxon>
        <taxon>Metazoa</taxon>
        <taxon>Ecdysozoa</taxon>
        <taxon>Arthropoda</taxon>
        <taxon>Hexapoda</taxon>
        <taxon>Insecta</taxon>
        <taxon>Pterygota</taxon>
        <taxon>Neoptera</taxon>
        <taxon>Endopterygota</taxon>
        <taxon>Diptera</taxon>
        <taxon>Brachycera</taxon>
        <taxon>Muscomorpha</taxon>
        <taxon>Ephydroidea</taxon>
        <taxon>Drosophilidae</taxon>
        <taxon>Drosophila</taxon>
        <taxon>Sophophora</taxon>
    </lineage>
</organism>
<gene>
    <name type="primary">Or94a</name>
    <name type="ORF">CG17241</name>
</gene>
<feature type="chain" id="PRO_0000174282" description="Odorant receptor 94a">
    <location>
        <begin position="1"/>
        <end position="387"/>
    </location>
</feature>
<feature type="topological domain" description="Cytoplasmic" evidence="2">
    <location>
        <begin position="1"/>
        <end position="45"/>
    </location>
</feature>
<feature type="transmembrane region" description="Helical; Name=1" evidence="2">
    <location>
        <begin position="46"/>
        <end position="66"/>
    </location>
</feature>
<feature type="topological domain" description="Extracellular" evidence="2">
    <location>
        <begin position="67"/>
        <end position="75"/>
    </location>
</feature>
<feature type="transmembrane region" description="Helical; Name=2" evidence="2">
    <location>
        <begin position="76"/>
        <end position="96"/>
    </location>
</feature>
<feature type="topological domain" description="Cytoplasmic" evidence="2">
    <location>
        <begin position="97"/>
        <end position="133"/>
    </location>
</feature>
<feature type="transmembrane region" description="Helical; Name=3" evidence="2">
    <location>
        <begin position="134"/>
        <end position="154"/>
    </location>
</feature>
<feature type="topological domain" description="Extracellular" evidence="2">
    <location>
        <begin position="155"/>
        <end position="191"/>
    </location>
</feature>
<feature type="transmembrane region" description="Helical; Name=4" evidence="2">
    <location>
        <begin position="192"/>
        <end position="212"/>
    </location>
</feature>
<feature type="topological domain" description="Cytoplasmic" evidence="2">
    <location>
        <begin position="213"/>
        <end position="255"/>
    </location>
</feature>
<feature type="transmembrane region" description="Helical; Name=5" evidence="2">
    <location>
        <begin position="256"/>
        <end position="276"/>
    </location>
</feature>
<feature type="topological domain" description="Extracellular" evidence="2">
    <location>
        <begin position="277"/>
        <end position="290"/>
    </location>
</feature>
<feature type="transmembrane region" description="Helical; Name=6" evidence="2">
    <location>
        <begin position="291"/>
        <end position="311"/>
    </location>
</feature>
<feature type="topological domain" description="Cytoplasmic" evidence="2">
    <location>
        <begin position="312"/>
        <end position="362"/>
    </location>
</feature>
<feature type="transmembrane region" description="Helical; Name=7" evidence="2">
    <location>
        <begin position="363"/>
        <end position="383"/>
    </location>
</feature>
<feature type="topological domain" description="Extracellular" evidence="2">
    <location>
        <begin position="384"/>
        <end position="387"/>
    </location>
</feature>
<feature type="glycosylation site" description="N-linked (GlcNAc...) asparagine" evidence="2">
    <location>
        <position position="384"/>
    </location>
</feature>
<proteinExistence type="inferred from homology"/>